<protein>
    <recommendedName>
        <fullName>Iota-conotoxin RXIA</fullName>
    </recommendedName>
    <alternativeName>
        <fullName>R11.6</fullName>
    </alternativeName>
    <alternativeName>
        <fullName>r11a</fullName>
    </alternativeName>
</protein>
<comment type="function">
    <text evidence="3 4">Iota-conotoxins bind to voltage-gated sodium channels and act as agonists by shifting the voltage-dependence of activation to more hyperpolarized levels. This toxin acts on Nav1.6/SCN8A &gt; Nav1.2/SCN2A &gt; Nav1.7/SCN9A sodium channels. Produces general excitatory symptoms upon intracorporeal injection and repetitive action potentials in the frog cutaneous pectoris muscle. Natural peptide (with D-Phe) is active on nerve, but not on muscle. Synthetic peptide (with L-Phe) is not active on both nerve and muscle.</text>
</comment>
<comment type="subcellular location">
    <subcellularLocation>
        <location>Secreted</location>
    </subcellularLocation>
</comment>
<comment type="tissue specificity">
    <text>Expressed by the venom duct.</text>
</comment>
<comment type="domain">
    <text>The cysteine framework is XI (C-C-CC-CC-C-C).</text>
</comment>
<comment type="PTM">
    <text>The natural D-Phe-44 form of the peptide is more potent than the L-Phe-44 form.</text>
</comment>
<comment type="mass spectrometry"/>
<comment type="miscellaneous">
    <text evidence="6 7">Negative results: does not have effect on sodium channels Nav1.1/SCN1A, Nav1.3/SCN3A, Nav1.4/SCN4A, Nav1.5/SCN5A and on potassium channels Kv7.2/KCNQ2, Kv7.3/KCNQ3, Kv1.2/KCNA2, Kv1.3/KCNA3, Kv1.4/KCNA4, Kv1.5/KCNA5 and Kv1.6/KCNA6 (PubMed:17696362, PubMed:18486102).</text>
</comment>
<comment type="similarity">
    <text evidence="5">Belongs to the conotoxin I1 superfamily.</text>
</comment>
<proteinExistence type="evidence at protein level"/>
<organism>
    <name type="scientific">Conus radiatus</name>
    <name type="common">Rayed cone</name>
    <dbReference type="NCBI Taxonomy" id="61198"/>
    <lineage>
        <taxon>Eukaryota</taxon>
        <taxon>Metazoa</taxon>
        <taxon>Spiralia</taxon>
        <taxon>Lophotrochozoa</taxon>
        <taxon>Mollusca</taxon>
        <taxon>Gastropoda</taxon>
        <taxon>Caenogastropoda</taxon>
        <taxon>Neogastropoda</taxon>
        <taxon>Conoidea</taxon>
        <taxon>Conidae</taxon>
        <taxon>Conus</taxon>
        <taxon>Phasmoconus</taxon>
    </lineage>
</organism>
<name>I1BA_CONRA</name>
<feature type="chain" id="PRO_0000086868" description="Iota-conotoxin RXIA">
    <location>
        <begin position="1"/>
        <end position="46"/>
    </location>
</feature>
<feature type="modified residue" description="4-hydroxyproline; partial" evidence="1">
    <location>
        <position position="2"/>
    </location>
</feature>
<feature type="modified residue" description="4-hydroxyproline; partial" evidence="1">
    <location>
        <position position="11"/>
    </location>
</feature>
<feature type="modified residue" description="4-hydroxyproline" evidence="1">
    <location>
        <position position="29"/>
    </location>
</feature>
<feature type="modified residue" description="D-phenylalanine" evidence="2">
    <location>
        <position position="44"/>
    </location>
</feature>
<feature type="disulfide bond" evidence="3 8 9 10">
    <location>
        <begin position="5"/>
        <end position="19"/>
    </location>
</feature>
<feature type="disulfide bond" evidence="3 8 9 10">
    <location>
        <begin position="12"/>
        <end position="22"/>
    </location>
</feature>
<feature type="disulfide bond" evidence="3 8 9 10">
    <location>
        <begin position="18"/>
        <end position="27"/>
    </location>
</feature>
<feature type="disulfide bond" evidence="3 8 9 10">
    <location>
        <begin position="21"/>
        <end position="38"/>
    </location>
</feature>
<feature type="strand" evidence="12">
    <location>
        <begin position="8"/>
        <end position="10"/>
    </location>
</feature>
<feature type="strand" evidence="11">
    <location>
        <begin position="18"/>
        <end position="23"/>
    </location>
</feature>
<feature type="strand" evidence="11">
    <location>
        <begin position="26"/>
        <end position="29"/>
    </location>
</feature>
<feature type="strand" evidence="11">
    <location>
        <begin position="32"/>
        <end position="35"/>
    </location>
</feature>
<accession>Q7Z094</accession>
<sequence>GPSFCKADEKPCEYHADCCNCCLSGICAPSTNWILPGCSTSSFFKI</sequence>
<keyword id="KW-0002">3D-structure</keyword>
<keyword id="KW-0208">D-amino acid</keyword>
<keyword id="KW-0903">Direct protein sequencing</keyword>
<keyword id="KW-1015">Disulfide bond</keyword>
<keyword id="KW-0379">Hydroxylation</keyword>
<keyword id="KW-0872">Ion channel impairing toxin</keyword>
<keyword id="KW-0528">Neurotoxin</keyword>
<keyword id="KW-0964">Secreted</keyword>
<keyword id="KW-0800">Toxin</keyword>
<keyword id="KW-0738">Voltage-gated sodium channel impairing toxin</keyword>
<evidence type="ECO:0000269" key="1">
    <source>
    </source>
</evidence>
<evidence type="ECO:0000269" key="2">
    <source>
    </source>
</evidence>
<evidence type="ECO:0000269" key="3">
    <source>
    </source>
</evidence>
<evidence type="ECO:0000269" key="4">
    <source>
    </source>
</evidence>
<evidence type="ECO:0000305" key="5"/>
<evidence type="ECO:0000305" key="6">
    <source>
    </source>
</evidence>
<evidence type="ECO:0000305" key="7">
    <source>
    </source>
</evidence>
<evidence type="ECO:0000312" key="8">
    <source>
        <dbReference type="PDB" id="2JRY"/>
    </source>
</evidence>
<evidence type="ECO:0000312" key="9">
    <source>
        <dbReference type="PDB" id="2JTU"/>
    </source>
</evidence>
<evidence type="ECO:0000312" key="10">
    <source>
        <dbReference type="PDB" id="2P4L"/>
    </source>
</evidence>
<evidence type="ECO:0007829" key="11">
    <source>
        <dbReference type="PDB" id="2JRY"/>
    </source>
</evidence>
<evidence type="ECO:0007829" key="12">
    <source>
        <dbReference type="PDB" id="2P4L"/>
    </source>
</evidence>
<dbReference type="EMBL" id="AY208959">
    <property type="protein sequence ID" value="AAP41541.1"/>
    <property type="molecule type" value="mRNA"/>
</dbReference>
<dbReference type="PDB" id="2JRY">
    <property type="method" value="NMR"/>
    <property type="chains" value="A=1-46"/>
</dbReference>
<dbReference type="PDB" id="2JTU">
    <property type="method" value="NMR"/>
    <property type="chains" value="A=1-38"/>
</dbReference>
<dbReference type="PDB" id="2P4L">
    <property type="method" value="NMR"/>
    <property type="chains" value="A=1-46"/>
</dbReference>
<dbReference type="PDBsum" id="2JRY"/>
<dbReference type="PDBsum" id="2JTU"/>
<dbReference type="PDBsum" id="2P4L"/>
<dbReference type="SMR" id="Q7Z094"/>
<dbReference type="ConoServer" id="840">
    <property type="toxin name" value="RXIA"/>
</dbReference>
<dbReference type="EvolutionaryTrace" id="Q7Z094"/>
<dbReference type="GO" id="GO:0005576">
    <property type="term" value="C:extracellular region"/>
    <property type="evidence" value="ECO:0007669"/>
    <property type="project" value="UniProtKB-SubCell"/>
</dbReference>
<dbReference type="GO" id="GO:0017080">
    <property type="term" value="F:sodium channel regulator activity"/>
    <property type="evidence" value="ECO:0007669"/>
    <property type="project" value="UniProtKB-KW"/>
</dbReference>
<dbReference type="GO" id="GO:0090729">
    <property type="term" value="F:toxin activity"/>
    <property type="evidence" value="ECO:0007669"/>
    <property type="project" value="UniProtKB-KW"/>
</dbReference>
<dbReference type="DisProt" id="DP01286"/>
<dbReference type="Gene3D" id="4.10.40.80">
    <property type="match status" value="1"/>
</dbReference>
<dbReference type="InterPro" id="IPR013141">
    <property type="entry name" value="Conotoxin-I_CS"/>
</dbReference>
<dbReference type="InterPro" id="IPR012624">
    <property type="entry name" value="Toxin_19"/>
</dbReference>
<dbReference type="Pfam" id="PF08088">
    <property type="entry name" value="Toxin_19"/>
    <property type="match status" value="1"/>
</dbReference>
<dbReference type="PROSITE" id="PS60019">
    <property type="entry name" value="I_CONOTOXIN"/>
    <property type="match status" value="1"/>
</dbReference>
<reference key="1">
    <citation type="journal article" date="2003" name="J. Neurochem.">
        <title>Novel excitatory Conus peptides define a new conotoxin superfamily.</title>
        <authorList>
            <person name="Jimenez E.C."/>
            <person name="Shetty R.P."/>
            <person name="Lirazan M."/>
            <person name="Rivier J."/>
            <person name="Walker C."/>
            <person name="Abogadie F.C."/>
            <person name="Yoshikami D."/>
            <person name="Cruz L.J."/>
            <person name="Olivera B.M."/>
        </authorList>
    </citation>
    <scope>NUCLEOTIDE SEQUENCE [MRNA]</scope>
    <scope>PROTEIN SEQUENCE</scope>
    <scope>HYDROXYLATION AT PRO-2; PRO-11 AND PRO-29</scope>
    <scope>MASS SPECTROMETRY</scope>
    <source>
        <tissue>Venom</tissue>
        <tissue>Venom duct</tissue>
    </source>
</reference>
<reference key="2">
    <citation type="journal article" date="2005" name="J. Biol. Chem.">
        <title>Post-translational amino acid isomerization: a functionally important D-amino acid in an excitatory peptide.</title>
        <authorList>
            <person name="Buczek O."/>
            <person name="Yoshikami D."/>
            <person name="Bulaj G."/>
            <person name="Jimenez E.C."/>
            <person name="Olivera B.M."/>
        </authorList>
    </citation>
    <scope>SYNTHESIS</scope>
    <scope>D-AMINO ACID AT PHE-44</scope>
    <source>
        <tissue>Venom</tissue>
    </source>
</reference>
<reference key="3">
    <citation type="journal article" date="2008" name="Biochem. Pharmacol.">
        <title>Specificity, affinity and efficacy of iota-conotoxin RXIA, an agonist of voltage-gated sodium channels Na(V)1.2, 1.6 and 1.7.</title>
        <authorList>
            <person name="Fiedler B."/>
            <person name="Zhang M.M."/>
            <person name="Buczek O."/>
            <person name="Azam L."/>
            <person name="Bulaj G."/>
            <person name="Norton R.S."/>
            <person name="Olivera B.M."/>
            <person name="Yoshikami D."/>
        </authorList>
    </citation>
    <scope>FUNCTION</scope>
</reference>
<reference key="4">
    <citation type="journal article" date="2007" name="Biochemistry">
        <title>Structure and sodium channel activity of an excitatory I(1)-superfamily conotoxin.</title>
        <authorList>
            <person name="Buczek O."/>
            <person name="Wei D."/>
            <person name="Babon J.J."/>
            <person name="Yang X."/>
            <person name="Fiedler B."/>
            <person name="Chen P."/>
            <person name="Yoshikami D."/>
            <person name="Olivera B.M."/>
            <person name="Bulaj G."/>
            <person name="Norton R.S."/>
        </authorList>
    </citation>
    <scope>STRUCTURE BY NMR</scope>
    <scope>DISULFIDE BONDS</scope>
    <scope>FUNCTION</scope>
    <scope>SYNTHESIS (D-PHE AND L-PHE)</scope>
</reference>
<reference key="5">
    <citation type="journal article" date="2007" name="Biochemistry">
        <authorList>
            <person name="Buczek O."/>
            <person name="Wei D."/>
            <person name="Babon J.J."/>
            <person name="Yang X."/>
            <person name="Fiedler B."/>
            <person name="Chen P."/>
            <person name="Yoshikami D."/>
            <person name="Olivera B.M."/>
            <person name="Bulaj G."/>
            <person name="Norton R.S."/>
        </authorList>
    </citation>
    <scope>ERRATUM OF PUBMED:17696362</scope>
</reference>